<feature type="chain" id="PRO_0000301354" description="Phosphoglucosamine mutase">
    <location>
        <begin position="1"/>
        <end position="443"/>
    </location>
</feature>
<feature type="active site" description="Phosphoserine intermediate" evidence="1">
    <location>
        <position position="102"/>
    </location>
</feature>
<feature type="binding site" description="via phosphate group" evidence="1">
    <location>
        <position position="102"/>
    </location>
    <ligand>
        <name>Mg(2+)</name>
        <dbReference type="ChEBI" id="CHEBI:18420"/>
    </ligand>
</feature>
<feature type="binding site" evidence="1">
    <location>
        <position position="241"/>
    </location>
    <ligand>
        <name>Mg(2+)</name>
        <dbReference type="ChEBI" id="CHEBI:18420"/>
    </ligand>
</feature>
<feature type="binding site" evidence="1">
    <location>
        <position position="243"/>
    </location>
    <ligand>
        <name>Mg(2+)</name>
        <dbReference type="ChEBI" id="CHEBI:18420"/>
    </ligand>
</feature>
<feature type="binding site" evidence="1">
    <location>
        <position position="245"/>
    </location>
    <ligand>
        <name>Mg(2+)</name>
        <dbReference type="ChEBI" id="CHEBI:18420"/>
    </ligand>
</feature>
<feature type="modified residue" description="Phosphoserine" evidence="1">
    <location>
        <position position="102"/>
    </location>
</feature>
<protein>
    <recommendedName>
        <fullName evidence="1">Phosphoglucosamine mutase</fullName>
        <ecNumber evidence="1">5.4.2.10</ecNumber>
    </recommendedName>
</protein>
<organism>
    <name type="scientific">Polaromonas sp. (strain JS666 / ATCC BAA-500)</name>
    <dbReference type="NCBI Taxonomy" id="296591"/>
    <lineage>
        <taxon>Bacteria</taxon>
        <taxon>Pseudomonadati</taxon>
        <taxon>Pseudomonadota</taxon>
        <taxon>Betaproteobacteria</taxon>
        <taxon>Burkholderiales</taxon>
        <taxon>Comamonadaceae</taxon>
        <taxon>Polaromonas</taxon>
    </lineage>
</organism>
<keyword id="KW-0413">Isomerase</keyword>
<keyword id="KW-0460">Magnesium</keyword>
<keyword id="KW-0479">Metal-binding</keyword>
<keyword id="KW-0597">Phosphoprotein</keyword>
<keyword id="KW-1185">Reference proteome</keyword>
<proteinExistence type="inferred from homology"/>
<name>GLMM_POLSJ</name>
<reference key="1">
    <citation type="journal article" date="2008" name="Appl. Environ. Microbiol.">
        <title>The genome of Polaromonas sp. strain JS666: insights into the evolution of a hydrocarbon- and xenobiotic-degrading bacterium, and features of relevance to biotechnology.</title>
        <authorList>
            <person name="Mattes T.E."/>
            <person name="Alexander A.K."/>
            <person name="Richardson P.M."/>
            <person name="Munk A.C."/>
            <person name="Han C.S."/>
            <person name="Stothard P."/>
            <person name="Coleman N.V."/>
        </authorList>
    </citation>
    <scope>NUCLEOTIDE SEQUENCE [LARGE SCALE GENOMIC DNA]</scope>
    <source>
        <strain>JS666 / ATCC BAA-500</strain>
    </source>
</reference>
<dbReference type="EC" id="5.4.2.10" evidence="1"/>
<dbReference type="EMBL" id="CP000316">
    <property type="protein sequence ID" value="ABE44765.1"/>
    <property type="molecule type" value="Genomic_DNA"/>
</dbReference>
<dbReference type="RefSeq" id="WP_011483763.1">
    <property type="nucleotide sequence ID" value="NC_007948.1"/>
</dbReference>
<dbReference type="SMR" id="Q129M7"/>
<dbReference type="STRING" id="296591.Bpro_2850"/>
<dbReference type="KEGG" id="pol:Bpro_2850"/>
<dbReference type="eggNOG" id="COG1109">
    <property type="taxonomic scope" value="Bacteria"/>
</dbReference>
<dbReference type="HOGENOM" id="CLU_016950_7_0_4"/>
<dbReference type="OrthoDB" id="9803322at2"/>
<dbReference type="Proteomes" id="UP000001983">
    <property type="component" value="Chromosome"/>
</dbReference>
<dbReference type="GO" id="GO:0005829">
    <property type="term" value="C:cytosol"/>
    <property type="evidence" value="ECO:0007669"/>
    <property type="project" value="TreeGrafter"/>
</dbReference>
<dbReference type="GO" id="GO:0000287">
    <property type="term" value="F:magnesium ion binding"/>
    <property type="evidence" value="ECO:0007669"/>
    <property type="project" value="UniProtKB-UniRule"/>
</dbReference>
<dbReference type="GO" id="GO:0008966">
    <property type="term" value="F:phosphoglucosamine mutase activity"/>
    <property type="evidence" value="ECO:0007669"/>
    <property type="project" value="UniProtKB-UniRule"/>
</dbReference>
<dbReference type="GO" id="GO:0004615">
    <property type="term" value="F:phosphomannomutase activity"/>
    <property type="evidence" value="ECO:0007669"/>
    <property type="project" value="TreeGrafter"/>
</dbReference>
<dbReference type="GO" id="GO:0005975">
    <property type="term" value="P:carbohydrate metabolic process"/>
    <property type="evidence" value="ECO:0007669"/>
    <property type="project" value="InterPro"/>
</dbReference>
<dbReference type="GO" id="GO:0009252">
    <property type="term" value="P:peptidoglycan biosynthetic process"/>
    <property type="evidence" value="ECO:0007669"/>
    <property type="project" value="TreeGrafter"/>
</dbReference>
<dbReference type="GO" id="GO:0006048">
    <property type="term" value="P:UDP-N-acetylglucosamine biosynthetic process"/>
    <property type="evidence" value="ECO:0007669"/>
    <property type="project" value="TreeGrafter"/>
</dbReference>
<dbReference type="CDD" id="cd05802">
    <property type="entry name" value="GlmM"/>
    <property type="match status" value="1"/>
</dbReference>
<dbReference type="FunFam" id="3.30.310.50:FF:000001">
    <property type="entry name" value="Phosphoglucosamine mutase"/>
    <property type="match status" value="1"/>
</dbReference>
<dbReference type="FunFam" id="3.40.120.10:FF:000001">
    <property type="entry name" value="Phosphoglucosamine mutase"/>
    <property type="match status" value="1"/>
</dbReference>
<dbReference type="FunFam" id="3.40.120.10:FF:000003">
    <property type="entry name" value="Phosphoglucosamine mutase"/>
    <property type="match status" value="1"/>
</dbReference>
<dbReference type="Gene3D" id="3.40.120.10">
    <property type="entry name" value="Alpha-D-Glucose-1,6-Bisphosphate, subunit A, domain 3"/>
    <property type="match status" value="3"/>
</dbReference>
<dbReference type="Gene3D" id="3.30.310.50">
    <property type="entry name" value="Alpha-D-phosphohexomutase, C-terminal domain"/>
    <property type="match status" value="1"/>
</dbReference>
<dbReference type="HAMAP" id="MF_01554_B">
    <property type="entry name" value="GlmM_B"/>
    <property type="match status" value="1"/>
</dbReference>
<dbReference type="InterPro" id="IPR005844">
    <property type="entry name" value="A-D-PHexomutase_a/b/a-I"/>
</dbReference>
<dbReference type="InterPro" id="IPR016055">
    <property type="entry name" value="A-D-PHexomutase_a/b/a-I/II/III"/>
</dbReference>
<dbReference type="InterPro" id="IPR005845">
    <property type="entry name" value="A-D-PHexomutase_a/b/a-II"/>
</dbReference>
<dbReference type="InterPro" id="IPR005846">
    <property type="entry name" value="A-D-PHexomutase_a/b/a-III"/>
</dbReference>
<dbReference type="InterPro" id="IPR005843">
    <property type="entry name" value="A-D-PHexomutase_C"/>
</dbReference>
<dbReference type="InterPro" id="IPR036900">
    <property type="entry name" value="A-D-PHexomutase_C_sf"/>
</dbReference>
<dbReference type="InterPro" id="IPR005841">
    <property type="entry name" value="Alpha-D-phosphohexomutase_SF"/>
</dbReference>
<dbReference type="InterPro" id="IPR006352">
    <property type="entry name" value="GlmM_bact"/>
</dbReference>
<dbReference type="InterPro" id="IPR050060">
    <property type="entry name" value="Phosphoglucosamine_mutase"/>
</dbReference>
<dbReference type="NCBIfam" id="TIGR01455">
    <property type="entry name" value="glmM"/>
    <property type="match status" value="1"/>
</dbReference>
<dbReference type="NCBIfam" id="NF008139">
    <property type="entry name" value="PRK10887.1"/>
    <property type="match status" value="1"/>
</dbReference>
<dbReference type="PANTHER" id="PTHR42946:SF1">
    <property type="entry name" value="PHOSPHOGLUCOMUTASE (ALPHA-D-GLUCOSE-1,6-BISPHOSPHATE-DEPENDENT)"/>
    <property type="match status" value="1"/>
</dbReference>
<dbReference type="PANTHER" id="PTHR42946">
    <property type="entry name" value="PHOSPHOHEXOSE MUTASE"/>
    <property type="match status" value="1"/>
</dbReference>
<dbReference type="Pfam" id="PF02878">
    <property type="entry name" value="PGM_PMM_I"/>
    <property type="match status" value="1"/>
</dbReference>
<dbReference type="Pfam" id="PF02879">
    <property type="entry name" value="PGM_PMM_II"/>
    <property type="match status" value="1"/>
</dbReference>
<dbReference type="Pfam" id="PF02880">
    <property type="entry name" value="PGM_PMM_III"/>
    <property type="match status" value="1"/>
</dbReference>
<dbReference type="Pfam" id="PF00408">
    <property type="entry name" value="PGM_PMM_IV"/>
    <property type="match status" value="1"/>
</dbReference>
<dbReference type="PRINTS" id="PR00509">
    <property type="entry name" value="PGMPMM"/>
</dbReference>
<dbReference type="SUPFAM" id="SSF55957">
    <property type="entry name" value="Phosphoglucomutase, C-terminal domain"/>
    <property type="match status" value="1"/>
</dbReference>
<dbReference type="SUPFAM" id="SSF53738">
    <property type="entry name" value="Phosphoglucomutase, first 3 domains"/>
    <property type="match status" value="3"/>
</dbReference>
<gene>
    <name evidence="1" type="primary">glmM</name>
    <name type="ordered locus">Bpro_2850</name>
</gene>
<accession>Q129M7</accession>
<evidence type="ECO:0000255" key="1">
    <source>
        <dbReference type="HAMAP-Rule" id="MF_01554"/>
    </source>
</evidence>
<comment type="function">
    <text evidence="1">Catalyzes the conversion of glucosamine-6-phosphate to glucosamine-1-phosphate.</text>
</comment>
<comment type="catalytic activity">
    <reaction evidence="1">
        <text>alpha-D-glucosamine 1-phosphate = D-glucosamine 6-phosphate</text>
        <dbReference type="Rhea" id="RHEA:23424"/>
        <dbReference type="ChEBI" id="CHEBI:58516"/>
        <dbReference type="ChEBI" id="CHEBI:58725"/>
        <dbReference type="EC" id="5.4.2.10"/>
    </reaction>
</comment>
<comment type="cofactor">
    <cofactor evidence="1">
        <name>Mg(2+)</name>
        <dbReference type="ChEBI" id="CHEBI:18420"/>
    </cofactor>
    <text evidence="1">Binds 1 Mg(2+) ion per subunit.</text>
</comment>
<comment type="PTM">
    <text evidence="1">Activated by phosphorylation.</text>
</comment>
<comment type="similarity">
    <text evidence="1">Belongs to the phosphohexose mutase family.</text>
</comment>
<sequence>MTRKYFGTDGIRGTVGQPPITPDFVLRLAHAVGRVLRRVESRPTVLIGKDTRISGYMLESALESGFNSAGVDVVLLGPLPTPGVAYLTRAQRASLGVVISASHNAYPDNGIKFFSAQGTKLSDEWELAVEAALEEPPVWVDSATLGKARRLDDAAGRYIEFCKSTFAHDLTLKGLKIVVDGAHGAAYHIAPKVFHELGAEVIAIGCAPDGLNINHEVGATHPEALITAVKANQADYGIALDGDADRLQMVDADGRLFNGDEVLFLMVSERLARGEKVPGTVGTLMTNMAVELALKSRGVEFVRAKVGDRYVLEELEKRGWLLGGEGSGHLLALDKHTTGDGLISALQVLQACVRSGKTIAQLLGDVVLFPQTLVNVRLKPGQDWKASEKLALETKAVEAELGDTGRLLIRASGTEPLLRVMVEARDARQAKACAERVADTVRS</sequence>